<comment type="function">
    <text evidence="1">Attaches a formyl group to the free amino group of methionyl-tRNA(fMet). The formyl group appears to play a dual role in the initiator identity of N-formylmethionyl-tRNA by promoting its recognition by IF2 and preventing the misappropriation of this tRNA by the elongation apparatus.</text>
</comment>
<comment type="catalytic activity">
    <reaction evidence="1">
        <text>L-methionyl-tRNA(fMet) + (6R)-10-formyltetrahydrofolate = N-formyl-L-methionyl-tRNA(fMet) + (6S)-5,6,7,8-tetrahydrofolate + H(+)</text>
        <dbReference type="Rhea" id="RHEA:24380"/>
        <dbReference type="Rhea" id="RHEA-COMP:9952"/>
        <dbReference type="Rhea" id="RHEA-COMP:9953"/>
        <dbReference type="ChEBI" id="CHEBI:15378"/>
        <dbReference type="ChEBI" id="CHEBI:57453"/>
        <dbReference type="ChEBI" id="CHEBI:78530"/>
        <dbReference type="ChEBI" id="CHEBI:78844"/>
        <dbReference type="ChEBI" id="CHEBI:195366"/>
        <dbReference type="EC" id="2.1.2.9"/>
    </reaction>
</comment>
<comment type="similarity">
    <text evidence="1">Belongs to the Fmt family.</text>
</comment>
<keyword id="KW-0648">Protein biosynthesis</keyword>
<keyword id="KW-0808">Transferase</keyword>
<gene>
    <name evidence="1" type="primary">fmt</name>
    <name type="ordered locus">Neut_0391</name>
</gene>
<dbReference type="EC" id="2.1.2.9" evidence="1"/>
<dbReference type="EMBL" id="CP000450">
    <property type="protein sequence ID" value="ABI58669.1"/>
    <property type="molecule type" value="Genomic_DNA"/>
</dbReference>
<dbReference type="RefSeq" id="WP_011633511.1">
    <property type="nucleotide sequence ID" value="NC_008344.1"/>
</dbReference>
<dbReference type="SMR" id="Q0AJ02"/>
<dbReference type="STRING" id="335283.Neut_0391"/>
<dbReference type="KEGG" id="net:Neut_0391"/>
<dbReference type="eggNOG" id="COG0223">
    <property type="taxonomic scope" value="Bacteria"/>
</dbReference>
<dbReference type="HOGENOM" id="CLU_033347_1_2_4"/>
<dbReference type="OrthoDB" id="9802815at2"/>
<dbReference type="Proteomes" id="UP000001966">
    <property type="component" value="Chromosome"/>
</dbReference>
<dbReference type="GO" id="GO:0005829">
    <property type="term" value="C:cytosol"/>
    <property type="evidence" value="ECO:0007669"/>
    <property type="project" value="TreeGrafter"/>
</dbReference>
<dbReference type="GO" id="GO:0004479">
    <property type="term" value="F:methionyl-tRNA formyltransferase activity"/>
    <property type="evidence" value="ECO:0007669"/>
    <property type="project" value="UniProtKB-UniRule"/>
</dbReference>
<dbReference type="CDD" id="cd08646">
    <property type="entry name" value="FMT_core_Met-tRNA-FMT_N"/>
    <property type="match status" value="1"/>
</dbReference>
<dbReference type="CDD" id="cd08704">
    <property type="entry name" value="Met_tRNA_FMT_C"/>
    <property type="match status" value="1"/>
</dbReference>
<dbReference type="FunFam" id="3.40.50.12230:FF:000001">
    <property type="entry name" value="Methionyl-tRNA formyltransferase"/>
    <property type="match status" value="1"/>
</dbReference>
<dbReference type="Gene3D" id="3.40.50.12230">
    <property type="match status" value="1"/>
</dbReference>
<dbReference type="HAMAP" id="MF_00182">
    <property type="entry name" value="Formyl_trans"/>
    <property type="match status" value="1"/>
</dbReference>
<dbReference type="InterPro" id="IPR005794">
    <property type="entry name" value="Fmt"/>
</dbReference>
<dbReference type="InterPro" id="IPR005793">
    <property type="entry name" value="Formyl_trans_C"/>
</dbReference>
<dbReference type="InterPro" id="IPR002376">
    <property type="entry name" value="Formyl_transf_N"/>
</dbReference>
<dbReference type="InterPro" id="IPR036477">
    <property type="entry name" value="Formyl_transf_N_sf"/>
</dbReference>
<dbReference type="InterPro" id="IPR011034">
    <property type="entry name" value="Formyl_transferase-like_C_sf"/>
</dbReference>
<dbReference type="InterPro" id="IPR044135">
    <property type="entry name" value="Met-tRNA-FMT_C"/>
</dbReference>
<dbReference type="InterPro" id="IPR041711">
    <property type="entry name" value="Met-tRNA-FMT_N"/>
</dbReference>
<dbReference type="NCBIfam" id="TIGR00460">
    <property type="entry name" value="fmt"/>
    <property type="match status" value="1"/>
</dbReference>
<dbReference type="PANTHER" id="PTHR11138">
    <property type="entry name" value="METHIONYL-TRNA FORMYLTRANSFERASE"/>
    <property type="match status" value="1"/>
</dbReference>
<dbReference type="PANTHER" id="PTHR11138:SF5">
    <property type="entry name" value="METHIONYL-TRNA FORMYLTRANSFERASE, MITOCHONDRIAL"/>
    <property type="match status" value="1"/>
</dbReference>
<dbReference type="Pfam" id="PF02911">
    <property type="entry name" value="Formyl_trans_C"/>
    <property type="match status" value="1"/>
</dbReference>
<dbReference type="Pfam" id="PF00551">
    <property type="entry name" value="Formyl_trans_N"/>
    <property type="match status" value="1"/>
</dbReference>
<dbReference type="SUPFAM" id="SSF50486">
    <property type="entry name" value="FMT C-terminal domain-like"/>
    <property type="match status" value="1"/>
</dbReference>
<dbReference type="SUPFAM" id="SSF53328">
    <property type="entry name" value="Formyltransferase"/>
    <property type="match status" value="1"/>
</dbReference>
<accession>Q0AJ02</accession>
<name>FMT_NITEC</name>
<evidence type="ECO:0000255" key="1">
    <source>
        <dbReference type="HAMAP-Rule" id="MF_00182"/>
    </source>
</evidence>
<reference key="1">
    <citation type="journal article" date="2007" name="Environ. Microbiol.">
        <title>Whole-genome analysis of the ammonia-oxidizing bacterium, Nitrosomonas eutropha C91: implications for niche adaptation.</title>
        <authorList>
            <person name="Stein L.Y."/>
            <person name="Arp D.J."/>
            <person name="Berube P.M."/>
            <person name="Chain P.S."/>
            <person name="Hauser L."/>
            <person name="Jetten M.S."/>
            <person name="Klotz M.G."/>
            <person name="Larimer F.W."/>
            <person name="Norton J.M."/>
            <person name="Op den Camp H.J.M."/>
            <person name="Shin M."/>
            <person name="Wei X."/>
        </authorList>
    </citation>
    <scope>NUCLEOTIDE SEQUENCE [LARGE SCALE GENOMIC DNA]</scope>
    <source>
        <strain>DSM 101675 / C91 / Nm57</strain>
    </source>
</reference>
<proteinExistence type="inferred from homology"/>
<protein>
    <recommendedName>
        <fullName evidence="1">Methionyl-tRNA formyltransferase</fullName>
        <ecNumber evidence="1">2.1.2.9</ecNumber>
    </recommendedName>
</protein>
<feature type="chain" id="PRO_1000020109" description="Methionyl-tRNA formyltransferase">
    <location>
        <begin position="1"/>
        <end position="316"/>
    </location>
</feature>
<feature type="binding site" evidence="1">
    <location>
        <begin position="109"/>
        <end position="112"/>
    </location>
    <ligand>
        <name>(6S)-5,6,7,8-tetrahydrofolate</name>
        <dbReference type="ChEBI" id="CHEBI:57453"/>
    </ligand>
</feature>
<sequence>MKIIFAGTPVFAAKALEAVQKSGFDILLVLTQPDRPAGRGMKLQASPVKILAQQYNIPLLQPETLKSPDIQTQLETLKPDVMIVAAYGLILPEAVLRIPRHGCINIHASLLPRWRGAAPIQRALLEGDAETGISIMQMDQGLDTGAVLLKRAFLIEPHDTAATLHDKLADLGGKCIVETLTLLDQDKLTPTLQDNASACYAAKIRKSEAEIDWTRDSTHIDRMIRTFNPYPGAFTSLHGSMIKLWQANIINRSDTRQAGEIIAADHNGIIVACGRDALSINILQKAGGKKLTAAQFLAGHPLQPGEHFQKTTQGHL</sequence>
<organism>
    <name type="scientific">Nitrosomonas eutropha (strain DSM 101675 / C91 / Nm57)</name>
    <dbReference type="NCBI Taxonomy" id="335283"/>
    <lineage>
        <taxon>Bacteria</taxon>
        <taxon>Pseudomonadati</taxon>
        <taxon>Pseudomonadota</taxon>
        <taxon>Betaproteobacteria</taxon>
        <taxon>Nitrosomonadales</taxon>
        <taxon>Nitrosomonadaceae</taxon>
        <taxon>Nitrosomonas</taxon>
    </lineage>
</organism>